<proteinExistence type="inferred from homology"/>
<sequence>MSAIPVIAIDGPTASGKGTVASLVAEKLGFHYLDSGALYRLVALASEKHGIDVKNGPELGLLVPKLLISFKNSQIFLDDDEVTDAIRTESIGLRASALAVHPEVRSALVGLQRSFRQFPGLVADGRDMASVIFPDAVLKVFLTATAAARAERRYKQLIAKGISAKLSDLLQDLQERDARDSSRGTAPLLVADGAKVLETSDLSIDQAVKTVLDWYQSAIA</sequence>
<feature type="chain" id="PRO_1000078343" description="Cytidylate kinase">
    <location>
        <begin position="1"/>
        <end position="220"/>
    </location>
</feature>
<feature type="binding site" evidence="1">
    <location>
        <begin position="11"/>
        <end position="19"/>
    </location>
    <ligand>
        <name>ATP</name>
        <dbReference type="ChEBI" id="CHEBI:30616"/>
    </ligand>
</feature>
<dbReference type="EC" id="2.7.4.25" evidence="1"/>
<dbReference type="EMBL" id="CP000655">
    <property type="protein sequence ID" value="ABP33719.1"/>
    <property type="molecule type" value="Genomic_DNA"/>
</dbReference>
<dbReference type="RefSeq" id="WP_011902344.1">
    <property type="nucleotide sequence ID" value="NC_009379.1"/>
</dbReference>
<dbReference type="SMR" id="A4SW55"/>
<dbReference type="GeneID" id="31480853"/>
<dbReference type="KEGG" id="pnu:Pnuc_0499"/>
<dbReference type="eggNOG" id="COG0283">
    <property type="taxonomic scope" value="Bacteria"/>
</dbReference>
<dbReference type="HOGENOM" id="CLU_079959_2_0_4"/>
<dbReference type="Proteomes" id="UP000000231">
    <property type="component" value="Chromosome"/>
</dbReference>
<dbReference type="GO" id="GO:0005737">
    <property type="term" value="C:cytoplasm"/>
    <property type="evidence" value="ECO:0007669"/>
    <property type="project" value="UniProtKB-SubCell"/>
</dbReference>
<dbReference type="GO" id="GO:0005524">
    <property type="term" value="F:ATP binding"/>
    <property type="evidence" value="ECO:0007669"/>
    <property type="project" value="UniProtKB-UniRule"/>
</dbReference>
<dbReference type="GO" id="GO:0036430">
    <property type="term" value="F:CMP kinase activity"/>
    <property type="evidence" value="ECO:0007669"/>
    <property type="project" value="RHEA"/>
</dbReference>
<dbReference type="GO" id="GO:0036431">
    <property type="term" value="F:dCMP kinase activity"/>
    <property type="evidence" value="ECO:0007669"/>
    <property type="project" value="RHEA"/>
</dbReference>
<dbReference type="GO" id="GO:0006220">
    <property type="term" value="P:pyrimidine nucleotide metabolic process"/>
    <property type="evidence" value="ECO:0007669"/>
    <property type="project" value="UniProtKB-UniRule"/>
</dbReference>
<dbReference type="CDD" id="cd02020">
    <property type="entry name" value="CMPK"/>
    <property type="match status" value="1"/>
</dbReference>
<dbReference type="Gene3D" id="3.40.50.300">
    <property type="entry name" value="P-loop containing nucleotide triphosphate hydrolases"/>
    <property type="match status" value="1"/>
</dbReference>
<dbReference type="HAMAP" id="MF_00238">
    <property type="entry name" value="Cytidyl_kinase_type1"/>
    <property type="match status" value="1"/>
</dbReference>
<dbReference type="InterPro" id="IPR003136">
    <property type="entry name" value="Cytidylate_kin"/>
</dbReference>
<dbReference type="InterPro" id="IPR011994">
    <property type="entry name" value="Cytidylate_kinase_dom"/>
</dbReference>
<dbReference type="InterPro" id="IPR027417">
    <property type="entry name" value="P-loop_NTPase"/>
</dbReference>
<dbReference type="NCBIfam" id="TIGR00017">
    <property type="entry name" value="cmk"/>
    <property type="match status" value="1"/>
</dbReference>
<dbReference type="Pfam" id="PF02224">
    <property type="entry name" value="Cytidylate_kin"/>
    <property type="match status" value="1"/>
</dbReference>
<dbReference type="SUPFAM" id="SSF52540">
    <property type="entry name" value="P-loop containing nucleoside triphosphate hydrolases"/>
    <property type="match status" value="1"/>
</dbReference>
<evidence type="ECO:0000255" key="1">
    <source>
        <dbReference type="HAMAP-Rule" id="MF_00238"/>
    </source>
</evidence>
<gene>
    <name evidence="1" type="primary">cmk</name>
    <name type="ordered locus">Pnuc_0499</name>
</gene>
<keyword id="KW-0067">ATP-binding</keyword>
<keyword id="KW-0963">Cytoplasm</keyword>
<keyword id="KW-0418">Kinase</keyword>
<keyword id="KW-0547">Nucleotide-binding</keyword>
<keyword id="KW-1185">Reference proteome</keyword>
<keyword id="KW-0808">Transferase</keyword>
<protein>
    <recommendedName>
        <fullName evidence="1">Cytidylate kinase</fullName>
        <shortName evidence="1">CK</shortName>
        <ecNumber evidence="1">2.7.4.25</ecNumber>
    </recommendedName>
    <alternativeName>
        <fullName evidence="1">Cytidine monophosphate kinase</fullName>
        <shortName evidence="1">CMP kinase</shortName>
    </alternativeName>
</protein>
<comment type="catalytic activity">
    <reaction evidence="1">
        <text>CMP + ATP = CDP + ADP</text>
        <dbReference type="Rhea" id="RHEA:11600"/>
        <dbReference type="ChEBI" id="CHEBI:30616"/>
        <dbReference type="ChEBI" id="CHEBI:58069"/>
        <dbReference type="ChEBI" id="CHEBI:60377"/>
        <dbReference type="ChEBI" id="CHEBI:456216"/>
        <dbReference type="EC" id="2.7.4.25"/>
    </reaction>
</comment>
<comment type="catalytic activity">
    <reaction evidence="1">
        <text>dCMP + ATP = dCDP + ADP</text>
        <dbReference type="Rhea" id="RHEA:25094"/>
        <dbReference type="ChEBI" id="CHEBI:30616"/>
        <dbReference type="ChEBI" id="CHEBI:57566"/>
        <dbReference type="ChEBI" id="CHEBI:58593"/>
        <dbReference type="ChEBI" id="CHEBI:456216"/>
        <dbReference type="EC" id="2.7.4.25"/>
    </reaction>
</comment>
<comment type="subcellular location">
    <subcellularLocation>
        <location evidence="1">Cytoplasm</location>
    </subcellularLocation>
</comment>
<comment type="similarity">
    <text evidence="1">Belongs to the cytidylate kinase family. Type 1 subfamily.</text>
</comment>
<organism>
    <name type="scientific">Polynucleobacter asymbioticus (strain DSM 18221 / CIP 109841 / QLW-P1DMWA-1)</name>
    <name type="common">Polynucleobacter necessarius subsp. asymbioticus</name>
    <dbReference type="NCBI Taxonomy" id="312153"/>
    <lineage>
        <taxon>Bacteria</taxon>
        <taxon>Pseudomonadati</taxon>
        <taxon>Pseudomonadota</taxon>
        <taxon>Betaproteobacteria</taxon>
        <taxon>Burkholderiales</taxon>
        <taxon>Burkholderiaceae</taxon>
        <taxon>Polynucleobacter</taxon>
    </lineage>
</organism>
<name>KCY_POLAQ</name>
<reference key="1">
    <citation type="journal article" date="2012" name="Stand. Genomic Sci.">
        <title>Complete genome sequence of Polynucleobacter necessarius subsp. asymbioticus type strain (QLW-P1DMWA-1(T)).</title>
        <authorList>
            <person name="Meincke L."/>
            <person name="Copeland A."/>
            <person name="Lapidus A."/>
            <person name="Lucas S."/>
            <person name="Berry K.W."/>
            <person name="Del Rio T.G."/>
            <person name="Hammon N."/>
            <person name="Dalin E."/>
            <person name="Tice H."/>
            <person name="Pitluck S."/>
            <person name="Richardson P."/>
            <person name="Bruce D."/>
            <person name="Goodwin L."/>
            <person name="Han C."/>
            <person name="Tapia R."/>
            <person name="Detter J.C."/>
            <person name="Schmutz J."/>
            <person name="Brettin T."/>
            <person name="Larimer F."/>
            <person name="Land M."/>
            <person name="Hauser L."/>
            <person name="Kyrpides N.C."/>
            <person name="Ivanova N."/>
            <person name="Goker M."/>
            <person name="Woyke T."/>
            <person name="Wu Q.L."/>
            <person name="Pockl M."/>
            <person name="Hahn M.W."/>
            <person name="Klenk H.P."/>
        </authorList>
    </citation>
    <scope>NUCLEOTIDE SEQUENCE [LARGE SCALE GENOMIC DNA]</scope>
    <source>
        <strain>DSM 18221 / CIP 109841 / QLW-P1DMWA-1</strain>
    </source>
</reference>
<accession>A4SW55</accession>